<sequence length="520" mass="55983">MPRKKGAAWEEPSSGNGTARAGPRRRGGPAGRKRERPERCSSSSGGGSSGDEDGPELDGAPGGGKRTARPATAGKAAGAAAIITEPEHTKERVKLEGSKCKGQLLIFGATNWDLIGRKEVPKQQAAYRNLGQNLWGPHRYGCLSGVRVRTVVSGSCAAHSLLITTEGKLWSWGRNEKGQLGHGDTKRVEAPRLIEALSHEAIVLAACGRNHTLALTDTGSVFAFGENKMGQLGLGNQTDAVPSPAQIMYNGQPITKMACGAEFSMLMDCKGNLYSFGCPEYGQLGHNSDGKFIARAQRIEYDCELVPRRVAIFIEKTKDGQILPVPNVVVRDVACGANHTLVLDSQKRVFSWGFGGYGRLGHAEQKDEMVPRLVKLFDFPGRGATQIYAGYTCSFAVSEVGGLFFWGATNTSRESTMYPKAVQDLCGWRIRSLACGKSSIIVAADESTISWGPSPTFGELGYGDHKPKSSTAAQEVKTLDGIFSEQVAMGYSHSLVIARDESEAEKEKLQRLPEYTPRTL</sequence>
<comment type="function">
    <text evidence="1 3">Multifunctional protein that may affect its functions by regulating the activity of small GTPases, such as RAC1 and RALA. Required for normal progress through the cell cycle, both during interphase and during mitosis. Required for the presence of normal levels of MAD2L1, AURKB and BIRC5 on inner centromeres during mitosis, and for normal attachment of kinetochores to mitotic spindles. Required for normal organization of the microtubule cytoskeleton in interphase cells. Functions as a guanine nucleotide exchange factor (GEF) for RALA. Interferes with the activation of RAC1 by guanine nucleotide exchange factors (By similarity). Prevents accumulation of active, GTP-bound RAC1, and suppresses RAC1-mediated reorganization of the actin cytoskeleton and formation of membrane protrusions (PubMed:25074804). Required for normal cellular responses to contacts with the extracellular matrix of adjacent cells, and for directional cell migration in response to a fibronectin gradient (in vitro) (By similarity).</text>
</comment>
<comment type="subunit">
    <text evidence="1 3">Interacts with RAC1 (PubMed:25074804). Interacts with nucleotide-free and with GDP and GTP-bound forms of RAC1, with a slight preference for GDP-bound RAC1. Binds preferentially to the nucleotide-free form of RAC1. Interacts with CORO1C. Interacts with microtubules (By similarity).</text>
</comment>
<comment type="subcellular location">
    <subcellularLocation>
        <location evidence="1">Nucleus</location>
        <location evidence="1">Nucleolus</location>
    </subcellularLocation>
    <subcellularLocation>
        <location evidence="1">Nucleus</location>
    </subcellularLocation>
    <subcellularLocation>
        <location evidence="1">Cytoplasm</location>
        <location evidence="1">Cytoskeleton</location>
    </subcellularLocation>
    <subcellularLocation>
        <location evidence="1">Chromosome</location>
        <location evidence="1">Centromere</location>
    </subcellularLocation>
    <subcellularLocation>
        <location evidence="1">Cytoplasm</location>
        <location evidence="1">Cytoskeleton</location>
        <location evidence="1">Spindle</location>
    </subcellularLocation>
    <subcellularLocation>
        <location evidence="1">Chromosome</location>
    </subcellularLocation>
    <subcellularLocation>
        <location evidence="1">Midbody</location>
    </subcellularLocation>
    <subcellularLocation>
        <location evidence="1">Cell membrane</location>
        <topology evidence="1">Peripheral membrane protein</topology>
        <orientation evidence="1">Cytoplasmic side</orientation>
    </subcellularLocation>
    <text evidence="1">Appears in the nucleus at G2, then concentrates at the inner centromere region of chromosomes during prophase. Redistributes to the midzone of the mitotic spindle during anaphase. Here, the protein covers the entire equatorial diameter from cortex to cortex. Colocalizes with cytoplasmic microtubules in interphase cells. Colocalizes with RAC1 at the cell membrane.</text>
</comment>
<comment type="induction">
    <text evidence="4">Induced by TP53/p53 in response to oxidative stress and DNA damage.</text>
</comment>
<organism>
    <name type="scientific">Mus musculus</name>
    <name type="common">Mouse</name>
    <dbReference type="NCBI Taxonomy" id="10090"/>
    <lineage>
        <taxon>Eukaryota</taxon>
        <taxon>Metazoa</taxon>
        <taxon>Chordata</taxon>
        <taxon>Craniata</taxon>
        <taxon>Vertebrata</taxon>
        <taxon>Euteleostomi</taxon>
        <taxon>Mammalia</taxon>
        <taxon>Eutheria</taxon>
        <taxon>Euarchontoglires</taxon>
        <taxon>Glires</taxon>
        <taxon>Rodentia</taxon>
        <taxon>Myomorpha</taxon>
        <taxon>Muroidea</taxon>
        <taxon>Muridae</taxon>
        <taxon>Murinae</taxon>
        <taxon>Mus</taxon>
        <taxon>Mus</taxon>
    </lineage>
</organism>
<gene>
    <name type="primary">Rcc2</name>
    <name type="synonym">Kiaa1470</name>
</gene>
<proteinExistence type="evidence at protein level"/>
<reference key="1">
    <citation type="journal article" date="2005" name="Science">
        <title>The transcriptional landscape of the mammalian genome.</title>
        <authorList>
            <person name="Carninci P."/>
            <person name="Kasukawa T."/>
            <person name="Katayama S."/>
            <person name="Gough J."/>
            <person name="Frith M.C."/>
            <person name="Maeda N."/>
            <person name="Oyama R."/>
            <person name="Ravasi T."/>
            <person name="Lenhard B."/>
            <person name="Wells C."/>
            <person name="Kodzius R."/>
            <person name="Shimokawa K."/>
            <person name="Bajic V.B."/>
            <person name="Brenner S.E."/>
            <person name="Batalov S."/>
            <person name="Forrest A.R."/>
            <person name="Zavolan M."/>
            <person name="Davis M.J."/>
            <person name="Wilming L.G."/>
            <person name="Aidinis V."/>
            <person name="Allen J.E."/>
            <person name="Ambesi-Impiombato A."/>
            <person name="Apweiler R."/>
            <person name="Aturaliya R.N."/>
            <person name="Bailey T.L."/>
            <person name="Bansal M."/>
            <person name="Baxter L."/>
            <person name="Beisel K.W."/>
            <person name="Bersano T."/>
            <person name="Bono H."/>
            <person name="Chalk A.M."/>
            <person name="Chiu K.P."/>
            <person name="Choudhary V."/>
            <person name="Christoffels A."/>
            <person name="Clutterbuck D.R."/>
            <person name="Crowe M.L."/>
            <person name="Dalla E."/>
            <person name="Dalrymple B.P."/>
            <person name="de Bono B."/>
            <person name="Della Gatta G."/>
            <person name="di Bernardo D."/>
            <person name="Down T."/>
            <person name="Engstrom P."/>
            <person name="Fagiolini M."/>
            <person name="Faulkner G."/>
            <person name="Fletcher C.F."/>
            <person name="Fukushima T."/>
            <person name="Furuno M."/>
            <person name="Futaki S."/>
            <person name="Gariboldi M."/>
            <person name="Georgii-Hemming P."/>
            <person name="Gingeras T.R."/>
            <person name="Gojobori T."/>
            <person name="Green R.E."/>
            <person name="Gustincich S."/>
            <person name="Harbers M."/>
            <person name="Hayashi Y."/>
            <person name="Hensch T.K."/>
            <person name="Hirokawa N."/>
            <person name="Hill D."/>
            <person name="Huminiecki L."/>
            <person name="Iacono M."/>
            <person name="Ikeo K."/>
            <person name="Iwama A."/>
            <person name="Ishikawa T."/>
            <person name="Jakt M."/>
            <person name="Kanapin A."/>
            <person name="Katoh M."/>
            <person name="Kawasawa Y."/>
            <person name="Kelso J."/>
            <person name="Kitamura H."/>
            <person name="Kitano H."/>
            <person name="Kollias G."/>
            <person name="Krishnan S.P."/>
            <person name="Kruger A."/>
            <person name="Kummerfeld S.K."/>
            <person name="Kurochkin I.V."/>
            <person name="Lareau L.F."/>
            <person name="Lazarevic D."/>
            <person name="Lipovich L."/>
            <person name="Liu J."/>
            <person name="Liuni S."/>
            <person name="McWilliam S."/>
            <person name="Madan Babu M."/>
            <person name="Madera M."/>
            <person name="Marchionni L."/>
            <person name="Matsuda H."/>
            <person name="Matsuzawa S."/>
            <person name="Miki H."/>
            <person name="Mignone F."/>
            <person name="Miyake S."/>
            <person name="Morris K."/>
            <person name="Mottagui-Tabar S."/>
            <person name="Mulder N."/>
            <person name="Nakano N."/>
            <person name="Nakauchi H."/>
            <person name="Ng P."/>
            <person name="Nilsson R."/>
            <person name="Nishiguchi S."/>
            <person name="Nishikawa S."/>
            <person name="Nori F."/>
            <person name="Ohara O."/>
            <person name="Okazaki Y."/>
            <person name="Orlando V."/>
            <person name="Pang K.C."/>
            <person name="Pavan W.J."/>
            <person name="Pavesi G."/>
            <person name="Pesole G."/>
            <person name="Petrovsky N."/>
            <person name="Piazza S."/>
            <person name="Reed J."/>
            <person name="Reid J.F."/>
            <person name="Ring B.Z."/>
            <person name="Ringwald M."/>
            <person name="Rost B."/>
            <person name="Ruan Y."/>
            <person name="Salzberg S.L."/>
            <person name="Sandelin A."/>
            <person name="Schneider C."/>
            <person name="Schoenbach C."/>
            <person name="Sekiguchi K."/>
            <person name="Semple C.A."/>
            <person name="Seno S."/>
            <person name="Sessa L."/>
            <person name="Sheng Y."/>
            <person name="Shibata Y."/>
            <person name="Shimada H."/>
            <person name="Shimada K."/>
            <person name="Silva D."/>
            <person name="Sinclair B."/>
            <person name="Sperling S."/>
            <person name="Stupka E."/>
            <person name="Sugiura K."/>
            <person name="Sultana R."/>
            <person name="Takenaka Y."/>
            <person name="Taki K."/>
            <person name="Tammoja K."/>
            <person name="Tan S.L."/>
            <person name="Tang S."/>
            <person name="Taylor M.S."/>
            <person name="Tegner J."/>
            <person name="Teichmann S.A."/>
            <person name="Ueda H.R."/>
            <person name="van Nimwegen E."/>
            <person name="Verardo R."/>
            <person name="Wei C.L."/>
            <person name="Yagi K."/>
            <person name="Yamanishi H."/>
            <person name="Zabarovsky E."/>
            <person name="Zhu S."/>
            <person name="Zimmer A."/>
            <person name="Hide W."/>
            <person name="Bult C."/>
            <person name="Grimmond S.M."/>
            <person name="Teasdale R.D."/>
            <person name="Liu E.T."/>
            <person name="Brusic V."/>
            <person name="Quackenbush J."/>
            <person name="Wahlestedt C."/>
            <person name="Mattick J.S."/>
            <person name="Hume D.A."/>
            <person name="Kai C."/>
            <person name="Sasaki D."/>
            <person name="Tomaru Y."/>
            <person name="Fukuda S."/>
            <person name="Kanamori-Katayama M."/>
            <person name="Suzuki M."/>
            <person name="Aoki J."/>
            <person name="Arakawa T."/>
            <person name="Iida J."/>
            <person name="Imamura K."/>
            <person name="Itoh M."/>
            <person name="Kato T."/>
            <person name="Kawaji H."/>
            <person name="Kawagashira N."/>
            <person name="Kawashima T."/>
            <person name="Kojima M."/>
            <person name="Kondo S."/>
            <person name="Konno H."/>
            <person name="Nakano K."/>
            <person name="Ninomiya N."/>
            <person name="Nishio T."/>
            <person name="Okada M."/>
            <person name="Plessy C."/>
            <person name="Shibata K."/>
            <person name="Shiraki T."/>
            <person name="Suzuki S."/>
            <person name="Tagami M."/>
            <person name="Waki K."/>
            <person name="Watahiki A."/>
            <person name="Okamura-Oho Y."/>
            <person name="Suzuki H."/>
            <person name="Kawai J."/>
            <person name="Hayashizaki Y."/>
        </authorList>
    </citation>
    <scope>NUCLEOTIDE SEQUENCE [LARGE SCALE MRNA]</scope>
    <source>
        <strain>C57BL/6J</strain>
    </source>
</reference>
<reference key="2">
    <citation type="journal article" date="2009" name="PLoS Biol.">
        <title>Lineage-specific biology revealed by a finished genome assembly of the mouse.</title>
        <authorList>
            <person name="Church D.M."/>
            <person name="Goodstadt L."/>
            <person name="Hillier L.W."/>
            <person name="Zody M.C."/>
            <person name="Goldstein S."/>
            <person name="She X."/>
            <person name="Bult C.J."/>
            <person name="Agarwala R."/>
            <person name="Cherry J.L."/>
            <person name="DiCuccio M."/>
            <person name="Hlavina W."/>
            <person name="Kapustin Y."/>
            <person name="Meric P."/>
            <person name="Maglott D."/>
            <person name="Birtle Z."/>
            <person name="Marques A.C."/>
            <person name="Graves T."/>
            <person name="Zhou S."/>
            <person name="Teague B."/>
            <person name="Potamousis K."/>
            <person name="Churas C."/>
            <person name="Place M."/>
            <person name="Herschleb J."/>
            <person name="Runnheim R."/>
            <person name="Forrest D."/>
            <person name="Amos-Landgraf J."/>
            <person name="Schwartz D.C."/>
            <person name="Cheng Z."/>
            <person name="Lindblad-Toh K."/>
            <person name="Eichler E.E."/>
            <person name="Ponting C.P."/>
        </authorList>
    </citation>
    <scope>NUCLEOTIDE SEQUENCE [LARGE SCALE GENOMIC DNA]</scope>
    <source>
        <strain>C57BL/6J</strain>
    </source>
</reference>
<reference key="3">
    <citation type="journal article" date="2004" name="Genome Res.">
        <title>The status, quality, and expansion of the NIH full-length cDNA project: the Mammalian Gene Collection (MGC).</title>
        <authorList>
            <consortium name="The MGC Project Team"/>
        </authorList>
    </citation>
    <scope>NUCLEOTIDE SEQUENCE [LARGE SCALE MRNA]</scope>
    <source>
        <strain>C57BL/6J</strain>
        <tissue>Brain</tissue>
    </source>
</reference>
<reference key="4">
    <citation type="journal article" date="2003" name="DNA Res.">
        <title>Prediction of the coding sequences of mouse homologues of KIAA gene: III. The complete nucleotide sequences of 500 mouse KIAA-homologous cDNAs identified by screening of terminal sequences of cDNA clones randomly sampled from size-fractionated libraries.</title>
        <authorList>
            <person name="Okazaki N."/>
            <person name="Kikuno R."/>
            <person name="Ohara R."/>
            <person name="Inamoto S."/>
            <person name="Koseki H."/>
            <person name="Hiraoka S."/>
            <person name="Saga Y."/>
            <person name="Nagase T."/>
            <person name="Ohara O."/>
            <person name="Koga H."/>
        </authorList>
    </citation>
    <scope>NUCLEOTIDE SEQUENCE [LARGE SCALE MRNA] OF 37-520</scope>
    <source>
        <tissue>Embryonic tail</tissue>
    </source>
</reference>
<reference key="5">
    <citation type="journal article" date="2007" name="Proc. Natl. Acad. Sci. U.S.A.">
        <title>Large-scale phosphorylation analysis of mouse liver.</title>
        <authorList>
            <person name="Villen J."/>
            <person name="Beausoleil S.A."/>
            <person name="Gerber S.A."/>
            <person name="Gygi S.P."/>
        </authorList>
    </citation>
    <scope>IDENTIFICATION BY MASS SPECTROMETRY [LARGE SCALE ANALYSIS]</scope>
    <source>
        <tissue>Liver</tissue>
    </source>
</reference>
<reference key="6">
    <citation type="journal article" date="2010" name="Cell">
        <title>A tissue-specific atlas of mouse protein phosphorylation and expression.</title>
        <authorList>
            <person name="Huttlin E.L."/>
            <person name="Jedrychowski M.P."/>
            <person name="Elias J.E."/>
            <person name="Goswami T."/>
            <person name="Rad R."/>
            <person name="Beausoleil S.A."/>
            <person name="Villen J."/>
            <person name="Haas W."/>
            <person name="Sowa M.E."/>
            <person name="Gygi S.P."/>
        </authorList>
    </citation>
    <scope>PHOSPHORYLATION [LARGE SCALE ANALYSIS] AT SER-48 AND SER-49</scope>
    <scope>IDENTIFICATION BY MASS SPECTROMETRY [LARGE SCALE ANALYSIS]</scope>
    <source>
        <tissue>Brain</tissue>
        <tissue>Heart</tissue>
        <tissue>Kidney</tissue>
        <tissue>Lung</tissue>
        <tissue>Pancreas</tissue>
        <tissue>Spleen</tissue>
        <tissue>Testis</tissue>
    </source>
</reference>
<reference key="7">
    <citation type="journal article" date="2013" name="Mol. Cell">
        <title>SIRT5-mediated lysine desuccinylation impacts diverse metabolic pathways.</title>
        <authorList>
            <person name="Park J."/>
            <person name="Chen Y."/>
            <person name="Tishkoff D.X."/>
            <person name="Peng C."/>
            <person name="Tan M."/>
            <person name="Dai L."/>
            <person name="Xie Z."/>
            <person name="Zhang Y."/>
            <person name="Zwaans B.M."/>
            <person name="Skinner M.E."/>
            <person name="Lombard D.B."/>
            <person name="Zhao Y."/>
        </authorList>
    </citation>
    <scope>ACETYLATION [LARGE SCALE ANALYSIS] AT LYS-122</scope>
    <scope>IDENTIFICATION BY MASS SPECTROMETRY [LARGE SCALE ANALYSIS]</scope>
    <source>
        <tissue>Embryonic fibroblast</tissue>
    </source>
</reference>
<reference key="8">
    <citation type="journal article" date="2014" name="J. Cell Sci.">
        <title>Coronin-1C and RCC2 guide mesenchymal migration by trafficking Rac1 and controlling GEF exposure.</title>
        <authorList>
            <person name="Williamson R.C."/>
            <person name="Cowell C.A."/>
            <person name="Hammond C.L."/>
            <person name="Bergen D.J."/>
            <person name="Roper J.A."/>
            <person name="Feng Y."/>
            <person name="Rendall T.C."/>
            <person name="Race P.R."/>
            <person name="Bass M.D."/>
        </authorList>
    </citation>
    <scope>FUNCTION</scope>
    <scope>INTERACTION WITH RAC1</scope>
</reference>
<reference key="9">
    <citation type="journal article" date="2018" name="Oncogene">
        <title>RCC2 is a novel p53 target in suppressing metastasis.</title>
        <authorList>
            <person name="Song C."/>
            <person name="Liang L."/>
            <person name="Jin Y."/>
            <person name="Li Y."/>
            <person name="Liu Y."/>
            <person name="Guo L."/>
            <person name="Wu C."/>
            <person name="Yun C.H."/>
            <person name="Yin Y."/>
        </authorList>
    </citation>
    <scope>INDUCTION</scope>
</reference>
<name>RCC2_MOUSE</name>
<protein>
    <recommendedName>
        <fullName>Protein RCC2</fullName>
    </recommendedName>
</protein>
<dbReference type="EMBL" id="AK076040">
    <property type="protein sequence ID" value="BAC36140.1"/>
    <property type="molecule type" value="mRNA"/>
</dbReference>
<dbReference type="EMBL" id="AL954710">
    <property type="status" value="NOT_ANNOTATED_CDS"/>
    <property type="molecule type" value="Genomic_DNA"/>
</dbReference>
<dbReference type="EMBL" id="BC086666">
    <property type="protein sequence ID" value="AAH86666.1"/>
    <property type="molecule type" value="mRNA"/>
</dbReference>
<dbReference type="EMBL" id="AK129370">
    <property type="protein sequence ID" value="BAC98180.1"/>
    <property type="molecule type" value="mRNA"/>
</dbReference>
<dbReference type="CCDS" id="CCDS18852.1"/>
<dbReference type="RefSeq" id="NP_776292.1">
    <property type="nucleotide sequence ID" value="NM_173867.5"/>
</dbReference>
<dbReference type="RefSeq" id="XP_006538534.1">
    <property type="nucleotide sequence ID" value="XM_006538471.4"/>
</dbReference>
<dbReference type="RefSeq" id="XP_036019464.1">
    <property type="nucleotide sequence ID" value="XM_036163571.1"/>
</dbReference>
<dbReference type="SMR" id="Q8BK67"/>
<dbReference type="BioGRID" id="224469">
    <property type="interactions" value="12"/>
</dbReference>
<dbReference type="FunCoup" id="Q8BK67">
    <property type="interactions" value="3244"/>
</dbReference>
<dbReference type="IntAct" id="Q8BK67">
    <property type="interactions" value="4"/>
</dbReference>
<dbReference type="MINT" id="Q8BK67"/>
<dbReference type="STRING" id="10090.ENSMUSP00000071163"/>
<dbReference type="GlyGen" id="Q8BK67">
    <property type="glycosylation" value="3 sites, 2 N-linked glycans (2 sites), 1 O-linked glycan (1 site)"/>
</dbReference>
<dbReference type="iPTMnet" id="Q8BK67"/>
<dbReference type="PhosphoSitePlus" id="Q8BK67"/>
<dbReference type="SwissPalm" id="Q8BK67"/>
<dbReference type="PaxDb" id="10090-ENSMUSP00000071163"/>
<dbReference type="PeptideAtlas" id="Q8BK67"/>
<dbReference type="ProteomicsDB" id="255171"/>
<dbReference type="Pumba" id="Q8BK67"/>
<dbReference type="Antibodypedia" id="29372">
    <property type="antibodies" value="206 antibodies from 29 providers"/>
</dbReference>
<dbReference type="DNASU" id="108911"/>
<dbReference type="Ensembl" id="ENSMUST00000038893.6">
    <property type="protein sequence ID" value="ENSMUSP00000038144.6"/>
    <property type="gene ID" value="ENSMUSG00000040945.14"/>
</dbReference>
<dbReference type="Ensembl" id="ENSMUST00000071169.9">
    <property type="protein sequence ID" value="ENSMUSP00000071163.3"/>
    <property type="gene ID" value="ENSMUSG00000040945.14"/>
</dbReference>
<dbReference type="GeneID" id="108911"/>
<dbReference type="KEGG" id="mmu:108911"/>
<dbReference type="UCSC" id="uc008vna.2">
    <property type="organism name" value="mouse"/>
</dbReference>
<dbReference type="AGR" id="MGI:1919784"/>
<dbReference type="CTD" id="55920"/>
<dbReference type="MGI" id="MGI:1919784">
    <property type="gene designation" value="Rcc2"/>
</dbReference>
<dbReference type="VEuPathDB" id="HostDB:ENSMUSG00000040945"/>
<dbReference type="eggNOG" id="KOG1427">
    <property type="taxonomic scope" value="Eukaryota"/>
</dbReference>
<dbReference type="GeneTree" id="ENSGT00940000156151"/>
<dbReference type="HOGENOM" id="CLU_005210_7_0_1"/>
<dbReference type="InParanoid" id="Q8BK67"/>
<dbReference type="OMA" id="GKWKNTG"/>
<dbReference type="OrthoDB" id="297375at2759"/>
<dbReference type="PhylomeDB" id="Q8BK67"/>
<dbReference type="TreeFam" id="TF101168"/>
<dbReference type="Reactome" id="R-MMU-141444">
    <property type="pathway name" value="Amplification of signal from unattached kinetochores via a MAD2 inhibitory signal"/>
</dbReference>
<dbReference type="Reactome" id="R-MMU-2467813">
    <property type="pathway name" value="Separation of Sister Chromatids"/>
</dbReference>
<dbReference type="Reactome" id="R-MMU-2500257">
    <property type="pathway name" value="Resolution of Sister Chromatid Cohesion"/>
</dbReference>
<dbReference type="Reactome" id="R-MMU-5663220">
    <property type="pathway name" value="RHO GTPases Activate Formins"/>
</dbReference>
<dbReference type="Reactome" id="R-MMU-68877">
    <property type="pathway name" value="Mitotic Prometaphase"/>
</dbReference>
<dbReference type="Reactome" id="R-MMU-9648025">
    <property type="pathway name" value="EML4 and NUDC in mitotic spindle formation"/>
</dbReference>
<dbReference type="BioGRID-ORCS" id="108911">
    <property type="hits" value="8 hits in 80 CRISPR screens"/>
</dbReference>
<dbReference type="ChiTaRS" id="Rcc2">
    <property type="organism name" value="mouse"/>
</dbReference>
<dbReference type="PRO" id="PR:Q8BK67"/>
<dbReference type="Proteomes" id="UP000000589">
    <property type="component" value="Chromosome 4"/>
</dbReference>
<dbReference type="RNAct" id="Q8BK67">
    <property type="molecule type" value="protein"/>
</dbReference>
<dbReference type="Bgee" id="ENSMUSG00000040945">
    <property type="expression patterns" value="Expressed in ventricular zone and 275 other cell types or tissues"/>
</dbReference>
<dbReference type="ExpressionAtlas" id="Q8BK67">
    <property type="expression patterns" value="baseline and differential"/>
</dbReference>
<dbReference type="GO" id="GO:0034506">
    <property type="term" value="C:chromosome, centromeric core domain"/>
    <property type="evidence" value="ECO:0007669"/>
    <property type="project" value="Ensembl"/>
</dbReference>
<dbReference type="GO" id="GO:0031901">
    <property type="term" value="C:early endosome membrane"/>
    <property type="evidence" value="ECO:0000314"/>
    <property type="project" value="UniProtKB"/>
</dbReference>
<dbReference type="GO" id="GO:0005874">
    <property type="term" value="C:microtubule"/>
    <property type="evidence" value="ECO:0007669"/>
    <property type="project" value="UniProtKB-KW"/>
</dbReference>
<dbReference type="GO" id="GO:0030496">
    <property type="term" value="C:midbody"/>
    <property type="evidence" value="ECO:0007669"/>
    <property type="project" value="UniProtKB-SubCell"/>
</dbReference>
<dbReference type="GO" id="GO:1990023">
    <property type="term" value="C:mitotic spindle midzone"/>
    <property type="evidence" value="ECO:0007669"/>
    <property type="project" value="Ensembl"/>
</dbReference>
<dbReference type="GO" id="GO:0005730">
    <property type="term" value="C:nucleolus"/>
    <property type="evidence" value="ECO:0007669"/>
    <property type="project" value="UniProtKB-SubCell"/>
</dbReference>
<dbReference type="GO" id="GO:0005634">
    <property type="term" value="C:nucleus"/>
    <property type="evidence" value="ECO:0000314"/>
    <property type="project" value="UniProtKB"/>
</dbReference>
<dbReference type="GO" id="GO:0005886">
    <property type="term" value="C:plasma membrane"/>
    <property type="evidence" value="ECO:0000314"/>
    <property type="project" value="UniProtKB"/>
</dbReference>
<dbReference type="GO" id="GO:0005085">
    <property type="term" value="F:guanyl-nucleotide exchange factor activity"/>
    <property type="evidence" value="ECO:0007669"/>
    <property type="project" value="UniProtKB-KW"/>
</dbReference>
<dbReference type="GO" id="GO:0008017">
    <property type="term" value="F:microtubule binding"/>
    <property type="evidence" value="ECO:0007669"/>
    <property type="project" value="Ensembl"/>
</dbReference>
<dbReference type="GO" id="GO:0019904">
    <property type="term" value="F:protein domain specific binding"/>
    <property type="evidence" value="ECO:0007669"/>
    <property type="project" value="Ensembl"/>
</dbReference>
<dbReference type="GO" id="GO:0019901">
    <property type="term" value="F:protein kinase binding"/>
    <property type="evidence" value="ECO:0007669"/>
    <property type="project" value="Ensembl"/>
</dbReference>
<dbReference type="GO" id="GO:0031267">
    <property type="term" value="F:small GTPase binding"/>
    <property type="evidence" value="ECO:0000353"/>
    <property type="project" value="UniProtKB"/>
</dbReference>
<dbReference type="GO" id="GO:0090630">
    <property type="term" value="P:activation of GTPase activity"/>
    <property type="evidence" value="ECO:0000316"/>
    <property type="project" value="UniProtKB"/>
</dbReference>
<dbReference type="GO" id="GO:0051301">
    <property type="term" value="P:cell division"/>
    <property type="evidence" value="ECO:0007669"/>
    <property type="project" value="UniProtKB-KW"/>
</dbReference>
<dbReference type="GO" id="GO:0072356">
    <property type="term" value="P:chromosome passenger complex localization to kinetochore"/>
    <property type="evidence" value="ECO:0007669"/>
    <property type="project" value="Ensembl"/>
</dbReference>
<dbReference type="GO" id="GO:0045184">
    <property type="term" value="P:establishment of protein localization"/>
    <property type="evidence" value="ECO:0000316"/>
    <property type="project" value="UniProtKB"/>
</dbReference>
<dbReference type="GO" id="GO:0048041">
    <property type="term" value="P:focal adhesion assembly"/>
    <property type="evidence" value="ECO:0007669"/>
    <property type="project" value="Ensembl"/>
</dbReference>
<dbReference type="GO" id="GO:0007229">
    <property type="term" value="P:integrin-mediated signaling pathway"/>
    <property type="evidence" value="ECO:0007669"/>
    <property type="project" value="Ensembl"/>
</dbReference>
<dbReference type="GO" id="GO:0051895">
    <property type="term" value="P:negative regulation of focal adhesion assembly"/>
    <property type="evidence" value="ECO:0000315"/>
    <property type="project" value="UniProtKB"/>
</dbReference>
<dbReference type="GO" id="GO:0034260">
    <property type="term" value="P:negative regulation of GTPase activity"/>
    <property type="evidence" value="ECO:0000315"/>
    <property type="project" value="UniProtKB"/>
</dbReference>
<dbReference type="GO" id="GO:1900025">
    <property type="term" value="P:negative regulation of substrate adhesion-dependent cell spreading"/>
    <property type="evidence" value="ECO:0000315"/>
    <property type="project" value="UniProtKB"/>
</dbReference>
<dbReference type="GO" id="GO:0051987">
    <property type="term" value="P:positive regulation of attachment of spindle microtubules to kinetochore"/>
    <property type="evidence" value="ECO:0007669"/>
    <property type="project" value="Ensembl"/>
</dbReference>
<dbReference type="GO" id="GO:0010971">
    <property type="term" value="P:positive regulation of G2/M transition of mitotic cell cycle"/>
    <property type="evidence" value="ECO:0007669"/>
    <property type="project" value="Ensembl"/>
</dbReference>
<dbReference type="GO" id="GO:0030334">
    <property type="term" value="P:regulation of cell migration"/>
    <property type="evidence" value="ECO:0000315"/>
    <property type="project" value="UniProtKB"/>
</dbReference>
<dbReference type="GO" id="GO:0010762">
    <property type="term" value="P:regulation of fibroblast migration"/>
    <property type="evidence" value="ECO:0000315"/>
    <property type="project" value="UniProtKB"/>
</dbReference>
<dbReference type="GO" id="GO:1900027">
    <property type="term" value="P:regulation of ruffle assembly"/>
    <property type="evidence" value="ECO:0000315"/>
    <property type="project" value="UniProtKB"/>
</dbReference>
<dbReference type="FunFam" id="2.130.10.30:FF:000022">
    <property type="entry name" value="RCC2 isoform 1"/>
    <property type="match status" value="1"/>
</dbReference>
<dbReference type="FunFam" id="2.130.10.30:FF:000009">
    <property type="entry name" value="Regulator of chromosome condensation 2"/>
    <property type="match status" value="1"/>
</dbReference>
<dbReference type="Gene3D" id="2.130.10.30">
    <property type="entry name" value="Regulator of chromosome condensation 1/beta-lactamase-inhibitor protein II"/>
    <property type="match status" value="2"/>
</dbReference>
<dbReference type="InterPro" id="IPR009091">
    <property type="entry name" value="RCC1/BLIP-II"/>
</dbReference>
<dbReference type="InterPro" id="IPR028641">
    <property type="entry name" value="RCC2"/>
</dbReference>
<dbReference type="InterPro" id="IPR000408">
    <property type="entry name" value="Reg_chr_condens"/>
</dbReference>
<dbReference type="PANTHER" id="PTHR46207">
    <property type="entry name" value="PROTEIN RCC2"/>
    <property type="match status" value="1"/>
</dbReference>
<dbReference type="PANTHER" id="PTHR46207:SF1">
    <property type="entry name" value="PROTEIN RCC2"/>
    <property type="match status" value="1"/>
</dbReference>
<dbReference type="Pfam" id="PF25390">
    <property type="entry name" value="WD40_RLD"/>
    <property type="match status" value="1"/>
</dbReference>
<dbReference type="PRINTS" id="PR00633">
    <property type="entry name" value="RCCNDNSATION"/>
</dbReference>
<dbReference type="SUPFAM" id="SSF50985">
    <property type="entry name" value="RCC1/BLIP-II"/>
    <property type="match status" value="1"/>
</dbReference>
<dbReference type="PROSITE" id="PS00626">
    <property type="entry name" value="RCC1_2"/>
    <property type="match status" value="2"/>
</dbReference>
<dbReference type="PROSITE" id="PS50012">
    <property type="entry name" value="RCC1_3"/>
    <property type="match status" value="5"/>
</dbReference>
<keyword id="KW-0007">Acetylation</keyword>
<keyword id="KW-0131">Cell cycle</keyword>
<keyword id="KW-0132">Cell division</keyword>
<keyword id="KW-1003">Cell membrane</keyword>
<keyword id="KW-0137">Centromere</keyword>
<keyword id="KW-0158">Chromosome</keyword>
<keyword id="KW-0963">Cytoplasm</keyword>
<keyword id="KW-0206">Cytoskeleton</keyword>
<keyword id="KW-0344">Guanine-nucleotide releasing factor</keyword>
<keyword id="KW-0472">Membrane</keyword>
<keyword id="KW-0493">Microtubule</keyword>
<keyword id="KW-0498">Mitosis</keyword>
<keyword id="KW-0539">Nucleus</keyword>
<keyword id="KW-0597">Phosphoprotein</keyword>
<keyword id="KW-1185">Reference proteome</keyword>
<keyword id="KW-0677">Repeat</keyword>
<evidence type="ECO:0000250" key="1">
    <source>
        <dbReference type="UniProtKB" id="Q9P258"/>
    </source>
</evidence>
<evidence type="ECO:0000256" key="2">
    <source>
        <dbReference type="SAM" id="MobiDB-lite"/>
    </source>
</evidence>
<evidence type="ECO:0000269" key="3">
    <source>
    </source>
</evidence>
<evidence type="ECO:0000269" key="4">
    <source>
    </source>
</evidence>
<evidence type="ECO:0007744" key="5">
    <source>
    </source>
</evidence>
<evidence type="ECO:0007744" key="6">
    <source>
    </source>
</evidence>
<feature type="chain" id="PRO_0000206653" description="Protein RCC2">
    <location>
        <begin position="1"/>
        <end position="520"/>
    </location>
</feature>
<feature type="repeat" description="RCC1 1">
    <location>
        <begin position="101"/>
        <end position="163"/>
    </location>
</feature>
<feature type="repeat" description="RCC1 2">
    <location>
        <begin position="166"/>
        <end position="217"/>
    </location>
</feature>
<feature type="repeat" description="RCC1 3">
    <location>
        <begin position="219"/>
        <end position="269"/>
    </location>
</feature>
<feature type="repeat" description="RCC1 4">
    <location>
        <begin position="271"/>
        <end position="345"/>
    </location>
</feature>
<feature type="repeat" description="RCC1 5">
    <location>
        <begin position="346"/>
        <end position="399"/>
    </location>
</feature>
<feature type="repeat" description="RCC1 6">
    <location>
        <begin position="401"/>
        <end position="445"/>
    </location>
</feature>
<feature type="repeat" description="RCC1 7">
    <location>
        <begin position="446"/>
        <end position="499"/>
    </location>
</feature>
<feature type="region of interest" description="Disordered" evidence="2">
    <location>
        <begin position="1"/>
        <end position="78"/>
    </location>
</feature>
<feature type="region of interest" description="Required for interaction with RAC1" evidence="1">
    <location>
        <begin position="316"/>
        <end position="323"/>
    </location>
</feature>
<feature type="compositionally biased region" description="Basic residues" evidence="2">
    <location>
        <begin position="22"/>
        <end position="34"/>
    </location>
</feature>
<feature type="compositionally biased region" description="Low complexity" evidence="2">
    <location>
        <begin position="69"/>
        <end position="78"/>
    </location>
</feature>
<feature type="modified residue" description="Phosphoserine" evidence="1">
    <location>
        <position position="14"/>
    </location>
</feature>
<feature type="modified residue" description="Phosphothreonine" evidence="1">
    <location>
        <position position="18"/>
    </location>
</feature>
<feature type="modified residue" description="Phosphoserine" evidence="1">
    <location>
        <position position="41"/>
    </location>
</feature>
<feature type="modified residue" description="Phosphoserine" evidence="1">
    <location>
        <position position="42"/>
    </location>
</feature>
<feature type="modified residue" description="Phosphoserine" evidence="1">
    <location>
        <position position="43"/>
    </location>
</feature>
<feature type="modified residue" description="Phosphoserine" evidence="1">
    <location>
        <position position="44"/>
    </location>
</feature>
<feature type="modified residue" description="Phosphoserine" evidence="5">
    <location>
        <position position="48"/>
    </location>
</feature>
<feature type="modified residue" description="Phosphoserine" evidence="5">
    <location>
        <position position="49"/>
    </location>
</feature>
<feature type="modified residue" description="N6-acetyllysine" evidence="1">
    <location>
        <position position="90"/>
    </location>
</feature>
<feature type="modified residue" description="N6-acetyllysine" evidence="6">
    <location>
        <position position="122"/>
    </location>
</feature>
<feature type="modified residue" description="N6-acetyllysine" evidence="1">
    <location>
        <position position="291"/>
    </location>
</feature>
<feature type="modified residue" description="Phosphothreonine" evidence="1">
    <location>
        <position position="340"/>
    </location>
</feature>
<feature type="modified residue" description="N6-acetyllysine" evidence="1">
    <location>
        <position position="375"/>
    </location>
</feature>
<accession>Q8BK67</accession>
<accession>A2AWQ3</accession>
<accession>Q6ZPQ0</accession>